<protein>
    <recommendedName>
        <fullName evidence="2">Photosystem II D2 protein</fullName>
        <shortName evidence="2">PSII D2 protein</shortName>
        <ecNumber evidence="2">1.10.3.9</ecNumber>
    </recommendedName>
    <alternativeName>
        <fullName evidence="2">Photosystem Q(A) protein</fullName>
    </alternativeName>
</protein>
<feature type="initiator methionine" description="Removed" evidence="1">
    <location>
        <position position="1"/>
    </location>
</feature>
<feature type="chain" id="PRO_0000359669" description="Photosystem II D2 protein">
    <location>
        <begin position="2"/>
        <end position="353"/>
    </location>
</feature>
<feature type="transmembrane region" description="Helical" evidence="2">
    <location>
        <begin position="41"/>
        <end position="61"/>
    </location>
</feature>
<feature type="transmembrane region" description="Helical" evidence="2">
    <location>
        <begin position="125"/>
        <end position="141"/>
    </location>
</feature>
<feature type="transmembrane region" description="Helical" evidence="2">
    <location>
        <begin position="153"/>
        <end position="166"/>
    </location>
</feature>
<feature type="transmembrane region" description="Helical" evidence="2">
    <location>
        <begin position="208"/>
        <end position="228"/>
    </location>
</feature>
<feature type="transmembrane region" description="Helical" evidence="2">
    <location>
        <begin position="279"/>
        <end position="295"/>
    </location>
</feature>
<feature type="binding site" description="axial binding residue" evidence="2">
    <location>
        <position position="118"/>
    </location>
    <ligand>
        <name>chlorophyll a</name>
        <dbReference type="ChEBI" id="CHEBI:58416"/>
        <label>ChlzD2</label>
    </ligand>
    <ligandPart>
        <name>Mg</name>
        <dbReference type="ChEBI" id="CHEBI:25107"/>
    </ligandPart>
</feature>
<feature type="binding site" evidence="2">
    <location>
        <position position="130"/>
    </location>
    <ligand>
        <name>pheophytin a</name>
        <dbReference type="ChEBI" id="CHEBI:136840"/>
        <label>D2</label>
    </ligand>
</feature>
<feature type="binding site" evidence="2">
    <location>
        <position position="143"/>
    </location>
    <ligand>
        <name>pheophytin a</name>
        <dbReference type="ChEBI" id="CHEBI:136840"/>
        <label>D2</label>
    </ligand>
</feature>
<feature type="binding site" description="axial binding residue" evidence="2">
    <location>
        <position position="198"/>
    </location>
    <ligand>
        <name>chlorophyll a</name>
        <dbReference type="ChEBI" id="CHEBI:58416"/>
        <label>PD2</label>
    </ligand>
    <ligandPart>
        <name>Mg</name>
        <dbReference type="ChEBI" id="CHEBI:25107"/>
    </ligandPart>
</feature>
<feature type="binding site" evidence="2">
    <location>
        <position position="215"/>
    </location>
    <ligand>
        <name>a plastoquinone</name>
        <dbReference type="ChEBI" id="CHEBI:17757"/>
        <label>Q(A)</label>
    </ligand>
</feature>
<feature type="binding site" evidence="2">
    <location>
        <position position="215"/>
    </location>
    <ligand>
        <name>Fe cation</name>
        <dbReference type="ChEBI" id="CHEBI:24875"/>
        <note>ligand shared with heterodimeric partner</note>
    </ligand>
</feature>
<feature type="binding site" evidence="2">
    <location>
        <position position="262"/>
    </location>
    <ligand>
        <name>a plastoquinone</name>
        <dbReference type="ChEBI" id="CHEBI:17757"/>
        <label>Q(A)</label>
    </ligand>
</feature>
<feature type="binding site" evidence="2">
    <location>
        <position position="269"/>
    </location>
    <ligand>
        <name>Fe cation</name>
        <dbReference type="ChEBI" id="CHEBI:24875"/>
        <note>ligand shared with heterodimeric partner</note>
    </ligand>
</feature>
<feature type="modified residue" description="N-acetylthreonine" evidence="1">
    <location>
        <position position="2"/>
    </location>
</feature>
<feature type="modified residue" description="Phosphothreonine" evidence="1">
    <location>
        <position position="2"/>
    </location>
</feature>
<name>PSBD_NANDO</name>
<keyword id="KW-0007">Acetylation</keyword>
<keyword id="KW-0148">Chlorophyll</keyword>
<keyword id="KW-0150">Chloroplast</keyword>
<keyword id="KW-0157">Chromophore</keyword>
<keyword id="KW-0249">Electron transport</keyword>
<keyword id="KW-0408">Iron</keyword>
<keyword id="KW-0460">Magnesium</keyword>
<keyword id="KW-0472">Membrane</keyword>
<keyword id="KW-0479">Metal-binding</keyword>
<keyword id="KW-0560">Oxidoreductase</keyword>
<keyword id="KW-0597">Phosphoprotein</keyword>
<keyword id="KW-0602">Photosynthesis</keyword>
<keyword id="KW-0604">Photosystem II</keyword>
<keyword id="KW-0934">Plastid</keyword>
<keyword id="KW-0793">Thylakoid</keyword>
<keyword id="KW-0812">Transmembrane</keyword>
<keyword id="KW-1133">Transmembrane helix</keyword>
<keyword id="KW-0813">Transport</keyword>
<organism>
    <name type="scientific">Nandina domestica</name>
    <name type="common">Heavenly bamboo</name>
    <dbReference type="NCBI Taxonomy" id="41776"/>
    <lineage>
        <taxon>Eukaryota</taxon>
        <taxon>Viridiplantae</taxon>
        <taxon>Streptophyta</taxon>
        <taxon>Embryophyta</taxon>
        <taxon>Tracheophyta</taxon>
        <taxon>Spermatophyta</taxon>
        <taxon>Magnoliopsida</taxon>
        <taxon>Ranunculales</taxon>
        <taxon>Berberidaceae</taxon>
        <taxon>Nandinoideae</taxon>
        <taxon>Nandineae</taxon>
        <taxon>Nandina</taxon>
    </lineage>
</organism>
<comment type="function">
    <text evidence="2">Photosystem II (PSII) is a light-driven water:plastoquinone oxidoreductase that uses light energy to abstract electrons from H(2)O, generating O(2) and a proton gradient subsequently used for ATP formation. It consists of a core antenna complex that captures photons, and an electron transfer chain that converts photonic excitation into a charge separation. The D1/D2 (PsbA/PsbD) reaction center heterodimer binds P680, the primary electron donor of PSII as well as several subsequent electron acceptors. D2 is needed for assembly of a stable PSII complex.</text>
</comment>
<comment type="catalytic activity">
    <reaction evidence="2">
        <text>2 a plastoquinone + 4 hnu + 2 H2O = 2 a plastoquinol + O2</text>
        <dbReference type="Rhea" id="RHEA:36359"/>
        <dbReference type="Rhea" id="RHEA-COMP:9561"/>
        <dbReference type="Rhea" id="RHEA-COMP:9562"/>
        <dbReference type="ChEBI" id="CHEBI:15377"/>
        <dbReference type="ChEBI" id="CHEBI:15379"/>
        <dbReference type="ChEBI" id="CHEBI:17757"/>
        <dbReference type="ChEBI" id="CHEBI:30212"/>
        <dbReference type="ChEBI" id="CHEBI:62192"/>
        <dbReference type="EC" id="1.10.3.9"/>
    </reaction>
</comment>
<comment type="cofactor">
    <text evidence="2">The D1/D2 heterodimer binds P680, chlorophylls that are the primary electron donor of PSII, and subsequent electron acceptors. It shares a non-heme iron and each subunit binds pheophytin, quinone, additional chlorophylls, carotenoids and lipids. There is also a Cl(-1) ion associated with D1 and D2, which is required for oxygen evolution. The PSII complex binds additional chlorophylls, carotenoids and specific lipids.</text>
</comment>
<comment type="subunit">
    <text evidence="2">PSII is composed of 1 copy each of membrane proteins PsbA, PsbB, PsbC, PsbD, PsbE, PsbF, PsbH, PsbI, PsbJ, PsbK, PsbL, PsbM, PsbT, PsbX, PsbY, PsbZ, Psb30/Ycf12, at least 3 peripheral proteins of the oxygen-evolving complex and a large number of cofactors. It forms dimeric complexes.</text>
</comment>
<comment type="subcellular location">
    <subcellularLocation>
        <location evidence="2">Plastid</location>
        <location evidence="2">Chloroplast thylakoid membrane</location>
        <topology evidence="2">Multi-pass membrane protein</topology>
    </subcellularLocation>
</comment>
<comment type="miscellaneous">
    <text evidence="2">2 of the reaction center chlorophylls (ChlD1 and ChlD2) are entirely coordinated by water.</text>
</comment>
<comment type="similarity">
    <text evidence="2">Belongs to the reaction center PufL/M/PsbA/D family.</text>
</comment>
<gene>
    <name evidence="2" type="primary">psbD</name>
</gene>
<sequence length="353" mass="39592">MTIALGRFTKDEKDLFDIMDDWLRRDRFVFVGWSGLLLFPCAYFALGGWFTGTTFVTSWYTHGLASSYLEGCNFLTAAVSTPANSLAHSLLLLWGPEAQGDFTRWCQLGGLWTFVALHGAFGLIGFMLRQFELARSVQLRPYNAIAFSGPIAVFVSVFLIYPLGQSGWFFAPSFGVAAIFRFILFFQGFHNWTLNPFHMMGVAGVLGAALLCAIHGATVENTLFEDGDGANTFRAFNPTQAEETYSMVTANRFWSQIFGVAFSNKRWLHFFMLFVPVTGLWMSALGVVGLALNLRAYDFVSQEIRAAEDPEFETFYTKNILLNEGIRAWMAAQDQPHENLIFPEEVLPRGNAL</sequence>
<geneLocation type="chloroplast"/>
<evidence type="ECO:0000250" key="1">
    <source>
        <dbReference type="UniProtKB" id="P56761"/>
    </source>
</evidence>
<evidence type="ECO:0000255" key="2">
    <source>
        <dbReference type="HAMAP-Rule" id="MF_01383"/>
    </source>
</evidence>
<reference key="1">
    <citation type="journal article" date="2006" name="BMC Plant Biol.">
        <title>Rapid and accurate pyrosequencing of angiosperm plastid genomes.</title>
        <authorList>
            <person name="Moore M.J."/>
            <person name="Dhingra A."/>
            <person name="Soltis P.S."/>
            <person name="Shaw R."/>
            <person name="Farmerie W.G."/>
            <person name="Folta K.M."/>
            <person name="Soltis D.E."/>
        </authorList>
    </citation>
    <scope>NUCLEOTIDE SEQUENCE [LARGE SCALE GENOMIC DNA]</scope>
</reference>
<dbReference type="EC" id="1.10.3.9" evidence="2"/>
<dbReference type="EMBL" id="DQ923117">
    <property type="protein sequence ID" value="ABI49858.1"/>
    <property type="molecule type" value="Genomic_DNA"/>
</dbReference>
<dbReference type="RefSeq" id="YP_740645.1">
    <property type="nucleotide sequence ID" value="NC_008336.1"/>
</dbReference>
<dbReference type="SMR" id="Q09FW6"/>
<dbReference type="GeneID" id="4271583"/>
<dbReference type="GO" id="GO:0009535">
    <property type="term" value="C:chloroplast thylakoid membrane"/>
    <property type="evidence" value="ECO:0007669"/>
    <property type="project" value="UniProtKB-SubCell"/>
</dbReference>
<dbReference type="GO" id="GO:0009523">
    <property type="term" value="C:photosystem II"/>
    <property type="evidence" value="ECO:0007669"/>
    <property type="project" value="UniProtKB-KW"/>
</dbReference>
<dbReference type="GO" id="GO:0016168">
    <property type="term" value="F:chlorophyll binding"/>
    <property type="evidence" value="ECO:0007669"/>
    <property type="project" value="UniProtKB-UniRule"/>
</dbReference>
<dbReference type="GO" id="GO:0045156">
    <property type="term" value="F:electron transporter, transferring electrons within the cyclic electron transport pathway of photosynthesis activity"/>
    <property type="evidence" value="ECO:0007669"/>
    <property type="project" value="InterPro"/>
</dbReference>
<dbReference type="GO" id="GO:0005506">
    <property type="term" value="F:iron ion binding"/>
    <property type="evidence" value="ECO:0007669"/>
    <property type="project" value="UniProtKB-UniRule"/>
</dbReference>
<dbReference type="GO" id="GO:0010242">
    <property type="term" value="F:oxygen evolving activity"/>
    <property type="evidence" value="ECO:0007669"/>
    <property type="project" value="UniProtKB-EC"/>
</dbReference>
<dbReference type="GO" id="GO:0009772">
    <property type="term" value="P:photosynthetic electron transport in photosystem II"/>
    <property type="evidence" value="ECO:0007669"/>
    <property type="project" value="InterPro"/>
</dbReference>
<dbReference type="CDD" id="cd09288">
    <property type="entry name" value="Photosystem-II_D2"/>
    <property type="match status" value="1"/>
</dbReference>
<dbReference type="FunFam" id="1.20.85.10:FF:000001">
    <property type="entry name" value="photosystem II D2 protein-like"/>
    <property type="match status" value="1"/>
</dbReference>
<dbReference type="Gene3D" id="1.20.85.10">
    <property type="entry name" value="Photosystem II protein D1-like"/>
    <property type="match status" value="1"/>
</dbReference>
<dbReference type="HAMAP" id="MF_01383">
    <property type="entry name" value="PSII_PsbD_D2"/>
    <property type="match status" value="1"/>
</dbReference>
<dbReference type="InterPro" id="IPR055266">
    <property type="entry name" value="D1/D2"/>
</dbReference>
<dbReference type="InterPro" id="IPR036854">
    <property type="entry name" value="Photo_II_D1/D2_sf"/>
</dbReference>
<dbReference type="InterPro" id="IPR000484">
    <property type="entry name" value="Photo_RC_L/M"/>
</dbReference>
<dbReference type="InterPro" id="IPR055265">
    <property type="entry name" value="Photo_RC_L/M_CS"/>
</dbReference>
<dbReference type="InterPro" id="IPR005868">
    <property type="entry name" value="PSII_PsbD/D2"/>
</dbReference>
<dbReference type="NCBIfam" id="TIGR01152">
    <property type="entry name" value="psbD"/>
    <property type="match status" value="1"/>
</dbReference>
<dbReference type="PANTHER" id="PTHR33149:SF12">
    <property type="entry name" value="PHOTOSYSTEM II D2 PROTEIN"/>
    <property type="match status" value="1"/>
</dbReference>
<dbReference type="PANTHER" id="PTHR33149">
    <property type="entry name" value="PHOTOSYSTEM II PROTEIN D1"/>
    <property type="match status" value="1"/>
</dbReference>
<dbReference type="Pfam" id="PF00124">
    <property type="entry name" value="Photo_RC"/>
    <property type="match status" value="1"/>
</dbReference>
<dbReference type="PRINTS" id="PR00256">
    <property type="entry name" value="REACTNCENTRE"/>
</dbReference>
<dbReference type="SUPFAM" id="SSF81483">
    <property type="entry name" value="Bacterial photosystem II reaction centre, L and M subunits"/>
    <property type="match status" value="1"/>
</dbReference>
<dbReference type="PROSITE" id="PS00244">
    <property type="entry name" value="REACTION_CENTER"/>
    <property type="match status" value="1"/>
</dbReference>
<accession>Q09FW6</accession>
<proteinExistence type="inferred from homology"/>